<name>ARLY_CLOP1</name>
<dbReference type="EC" id="4.3.2.1" evidence="1"/>
<dbReference type="EMBL" id="CP000246">
    <property type="protein sequence ID" value="ABG82434.1"/>
    <property type="molecule type" value="Genomic_DNA"/>
</dbReference>
<dbReference type="RefSeq" id="WP_011590304.1">
    <property type="nucleotide sequence ID" value="NC_008261.1"/>
</dbReference>
<dbReference type="SMR" id="Q0TTA6"/>
<dbReference type="STRING" id="195103.CPF_0682"/>
<dbReference type="PaxDb" id="195103-CPF_0682"/>
<dbReference type="KEGG" id="cpf:CPF_0682"/>
<dbReference type="eggNOG" id="COG0165">
    <property type="taxonomic scope" value="Bacteria"/>
</dbReference>
<dbReference type="HOGENOM" id="CLU_027272_2_3_9"/>
<dbReference type="UniPathway" id="UPA00068">
    <property type="reaction ID" value="UER00114"/>
</dbReference>
<dbReference type="Proteomes" id="UP000001823">
    <property type="component" value="Chromosome"/>
</dbReference>
<dbReference type="GO" id="GO:0005829">
    <property type="term" value="C:cytosol"/>
    <property type="evidence" value="ECO:0007669"/>
    <property type="project" value="TreeGrafter"/>
</dbReference>
<dbReference type="GO" id="GO:0004056">
    <property type="term" value="F:argininosuccinate lyase activity"/>
    <property type="evidence" value="ECO:0007669"/>
    <property type="project" value="UniProtKB-UniRule"/>
</dbReference>
<dbReference type="GO" id="GO:0042450">
    <property type="term" value="P:arginine biosynthetic process via ornithine"/>
    <property type="evidence" value="ECO:0007669"/>
    <property type="project" value="InterPro"/>
</dbReference>
<dbReference type="GO" id="GO:0006526">
    <property type="term" value="P:L-arginine biosynthetic process"/>
    <property type="evidence" value="ECO:0007669"/>
    <property type="project" value="UniProtKB-UniRule"/>
</dbReference>
<dbReference type="CDD" id="cd01359">
    <property type="entry name" value="Argininosuccinate_lyase"/>
    <property type="match status" value="1"/>
</dbReference>
<dbReference type="FunFam" id="1.10.40.30:FF:000001">
    <property type="entry name" value="Argininosuccinate lyase"/>
    <property type="match status" value="1"/>
</dbReference>
<dbReference type="FunFam" id="1.20.200.10:FF:000002">
    <property type="entry name" value="Argininosuccinate lyase"/>
    <property type="match status" value="1"/>
</dbReference>
<dbReference type="Gene3D" id="1.10.40.30">
    <property type="entry name" value="Fumarase/aspartase (C-terminal domain)"/>
    <property type="match status" value="1"/>
</dbReference>
<dbReference type="Gene3D" id="1.20.200.10">
    <property type="entry name" value="Fumarase/aspartase (Central domain)"/>
    <property type="match status" value="1"/>
</dbReference>
<dbReference type="Gene3D" id="1.10.275.10">
    <property type="entry name" value="Fumarase/aspartase (N-terminal domain)"/>
    <property type="match status" value="1"/>
</dbReference>
<dbReference type="HAMAP" id="MF_00006">
    <property type="entry name" value="Arg_succ_lyase"/>
    <property type="match status" value="1"/>
</dbReference>
<dbReference type="InterPro" id="IPR029419">
    <property type="entry name" value="Arg_succ_lyase_C"/>
</dbReference>
<dbReference type="InterPro" id="IPR009049">
    <property type="entry name" value="Argininosuccinate_lyase"/>
</dbReference>
<dbReference type="InterPro" id="IPR024083">
    <property type="entry name" value="Fumarase/histidase_N"/>
</dbReference>
<dbReference type="InterPro" id="IPR020557">
    <property type="entry name" value="Fumarate_lyase_CS"/>
</dbReference>
<dbReference type="InterPro" id="IPR000362">
    <property type="entry name" value="Fumarate_lyase_fam"/>
</dbReference>
<dbReference type="InterPro" id="IPR022761">
    <property type="entry name" value="Fumarate_lyase_N"/>
</dbReference>
<dbReference type="InterPro" id="IPR008948">
    <property type="entry name" value="L-Aspartase-like"/>
</dbReference>
<dbReference type="NCBIfam" id="TIGR00838">
    <property type="entry name" value="argH"/>
    <property type="match status" value="1"/>
</dbReference>
<dbReference type="PANTHER" id="PTHR43814">
    <property type="entry name" value="ARGININOSUCCINATE LYASE"/>
    <property type="match status" value="1"/>
</dbReference>
<dbReference type="PANTHER" id="PTHR43814:SF1">
    <property type="entry name" value="ARGININOSUCCINATE LYASE"/>
    <property type="match status" value="1"/>
</dbReference>
<dbReference type="Pfam" id="PF14698">
    <property type="entry name" value="ASL_C2"/>
    <property type="match status" value="1"/>
</dbReference>
<dbReference type="Pfam" id="PF00206">
    <property type="entry name" value="Lyase_1"/>
    <property type="match status" value="1"/>
</dbReference>
<dbReference type="PRINTS" id="PR00145">
    <property type="entry name" value="ARGSUCLYASE"/>
</dbReference>
<dbReference type="PRINTS" id="PR00149">
    <property type="entry name" value="FUMRATELYASE"/>
</dbReference>
<dbReference type="SUPFAM" id="SSF48557">
    <property type="entry name" value="L-aspartase-like"/>
    <property type="match status" value="1"/>
</dbReference>
<dbReference type="PROSITE" id="PS00163">
    <property type="entry name" value="FUMARATE_LYASES"/>
    <property type="match status" value="1"/>
</dbReference>
<comment type="catalytic activity">
    <reaction evidence="1">
        <text>2-(N(omega)-L-arginino)succinate = fumarate + L-arginine</text>
        <dbReference type="Rhea" id="RHEA:24020"/>
        <dbReference type="ChEBI" id="CHEBI:29806"/>
        <dbReference type="ChEBI" id="CHEBI:32682"/>
        <dbReference type="ChEBI" id="CHEBI:57472"/>
        <dbReference type="EC" id="4.3.2.1"/>
    </reaction>
</comment>
<comment type="pathway">
    <text evidence="1">Amino-acid biosynthesis; L-arginine biosynthesis; L-arginine from L-ornithine and carbamoyl phosphate: step 3/3.</text>
</comment>
<comment type="subcellular location">
    <subcellularLocation>
        <location evidence="1">Cytoplasm</location>
    </subcellularLocation>
</comment>
<comment type="similarity">
    <text evidence="1">Belongs to the lyase 1 family. Argininosuccinate lyase subfamily.</text>
</comment>
<organism>
    <name type="scientific">Clostridium perfringens (strain ATCC 13124 / DSM 756 / JCM 1290 / NCIMB 6125 / NCTC 8237 / Type A)</name>
    <dbReference type="NCBI Taxonomy" id="195103"/>
    <lineage>
        <taxon>Bacteria</taxon>
        <taxon>Bacillati</taxon>
        <taxon>Bacillota</taxon>
        <taxon>Clostridia</taxon>
        <taxon>Eubacteriales</taxon>
        <taxon>Clostridiaceae</taxon>
        <taxon>Clostridium</taxon>
    </lineage>
</organism>
<sequence length="466" mass="52601">MKLWGGRFTHQVDDLVNTFNSSISFDSRMYKEDIIGSIAHVTMLGEEKIIPKEDSKKIASGLYEILNKLNQGVLKIDNSSEDIHSFIESTLTDYIGEEGKKLHTGRSRNDQVTLDTKLYLKGYIKILICEILNLEKTLLNLSSENKETIMPGYTHMQKAQPITFAHHILAYSEMFKRDISRLLDCYKRLDEMPLGSGALATTTYPINREKVANLLGFSKVTLNSLDSVSDRDYAIETLSCLSLLMMHLSRFSEEIIIWSTDEFKFIELDDSYSTGSSIMPQKKNPDVAELVRGKTGRVYGDLMTLLTVMKGLPLAYNKDMQEDKEALFDGLDTTLLSIKTFNGMIKTMKINKSIMKTSASSGFTNATDVADYLVKKGVAFRDAHEIVGNLILYCIDEGKSIDNLSLSEFKTFSNKFENDIYKAINLLTCIEERKVIGGPSISSINIQIEHLNNFIQESNEKLNLLK</sequence>
<proteinExistence type="inferred from homology"/>
<gene>
    <name evidence="1" type="primary">argH</name>
    <name type="ordered locus">CPF_0682</name>
</gene>
<evidence type="ECO:0000255" key="1">
    <source>
        <dbReference type="HAMAP-Rule" id="MF_00006"/>
    </source>
</evidence>
<keyword id="KW-0028">Amino-acid biosynthesis</keyword>
<keyword id="KW-0055">Arginine biosynthesis</keyword>
<keyword id="KW-0963">Cytoplasm</keyword>
<keyword id="KW-0456">Lyase</keyword>
<reference key="1">
    <citation type="journal article" date="2006" name="Genome Res.">
        <title>Skewed genomic variability in strains of the toxigenic bacterial pathogen, Clostridium perfringens.</title>
        <authorList>
            <person name="Myers G.S.A."/>
            <person name="Rasko D.A."/>
            <person name="Cheung J.K."/>
            <person name="Ravel J."/>
            <person name="Seshadri R."/>
            <person name="DeBoy R.T."/>
            <person name="Ren Q."/>
            <person name="Varga J."/>
            <person name="Awad M.M."/>
            <person name="Brinkac L.M."/>
            <person name="Daugherty S.C."/>
            <person name="Haft D.H."/>
            <person name="Dodson R.J."/>
            <person name="Madupu R."/>
            <person name="Nelson W.C."/>
            <person name="Rosovitz M.J."/>
            <person name="Sullivan S.A."/>
            <person name="Khouri H."/>
            <person name="Dimitrov G.I."/>
            <person name="Watkins K.L."/>
            <person name="Mulligan S."/>
            <person name="Benton J."/>
            <person name="Radune D."/>
            <person name="Fisher D.J."/>
            <person name="Atkins H.S."/>
            <person name="Hiscox T."/>
            <person name="Jost B.H."/>
            <person name="Billington S.J."/>
            <person name="Songer J.G."/>
            <person name="McClane B.A."/>
            <person name="Titball R.W."/>
            <person name="Rood J.I."/>
            <person name="Melville S.B."/>
            <person name="Paulsen I.T."/>
        </authorList>
    </citation>
    <scope>NUCLEOTIDE SEQUENCE [LARGE SCALE GENOMIC DNA]</scope>
    <source>
        <strain>ATCC 13124 / DSM 756 / JCM 1290 / NCIMB 6125 / NCTC 8237 / S 107 / Type A</strain>
    </source>
</reference>
<accession>Q0TTA6</accession>
<feature type="chain" id="PRO_1000000471" description="Argininosuccinate lyase">
    <location>
        <begin position="1"/>
        <end position="466"/>
    </location>
</feature>
<protein>
    <recommendedName>
        <fullName evidence="1">Argininosuccinate lyase</fullName>
        <shortName evidence="1">ASAL</shortName>
        <ecNumber evidence="1">4.3.2.1</ecNumber>
    </recommendedName>
    <alternativeName>
        <fullName evidence="1">Arginosuccinase</fullName>
    </alternativeName>
</protein>